<sequence length="249" mass="27893">MYKLVLIRHGESTWNKENRFTGWVDVDLTEQGNREARQAGQLLKEAGYTFDIAYTSVLKRAIRTLWHVQDQMDLMYVPVVHSWRLNERHYGALSGLNKAETAAKYGDEQVLVWRRSYDTPPPALEPGDERAPYADPRYAKVPREQLPLTECLKDTVARVLPLWNESIAPAVKAGKQVLIAAHGNSLRALIKYLDGISDADIVGLNIPNGVPLVYELDESLTPIRHYYLGDQEAIAKAQAAVAQQGKSAA</sequence>
<protein>
    <recommendedName>
        <fullName evidence="1">2,3-bisphosphoglycerate-dependent phosphoglycerate mutase</fullName>
        <shortName evidence="1">BPG-dependent PGAM</shortName>
        <shortName evidence="1">PGAM</shortName>
        <shortName evidence="1">Phosphoglyceromutase</shortName>
        <shortName evidence="1">dPGM</shortName>
        <ecNumber evidence="1">5.4.2.11</ecNumber>
    </recommendedName>
</protein>
<keyword id="KW-0312">Gluconeogenesis</keyword>
<keyword id="KW-0324">Glycolysis</keyword>
<keyword id="KW-0413">Isomerase</keyword>
<name>GPMA_BURP0</name>
<proteinExistence type="inferred from homology"/>
<dbReference type="EC" id="5.4.2.11" evidence="1"/>
<dbReference type="EMBL" id="CP000572">
    <property type="protein sequence ID" value="ABN91613.1"/>
    <property type="molecule type" value="Genomic_DNA"/>
</dbReference>
<dbReference type="RefSeq" id="WP_004198007.1">
    <property type="nucleotide sequence ID" value="NC_009076.1"/>
</dbReference>
<dbReference type="SMR" id="A3NR09"/>
<dbReference type="GeneID" id="93058961"/>
<dbReference type="KEGG" id="bpl:BURPS1106A_0497"/>
<dbReference type="HOGENOM" id="CLU_033323_1_1_4"/>
<dbReference type="UniPathway" id="UPA00109">
    <property type="reaction ID" value="UER00186"/>
</dbReference>
<dbReference type="Proteomes" id="UP000006738">
    <property type="component" value="Chromosome I"/>
</dbReference>
<dbReference type="GO" id="GO:0004619">
    <property type="term" value="F:phosphoglycerate mutase activity"/>
    <property type="evidence" value="ECO:0007669"/>
    <property type="project" value="UniProtKB-EC"/>
</dbReference>
<dbReference type="GO" id="GO:0006094">
    <property type="term" value="P:gluconeogenesis"/>
    <property type="evidence" value="ECO:0007669"/>
    <property type="project" value="UniProtKB-UniRule"/>
</dbReference>
<dbReference type="GO" id="GO:0006096">
    <property type="term" value="P:glycolytic process"/>
    <property type="evidence" value="ECO:0007669"/>
    <property type="project" value="UniProtKB-UniRule"/>
</dbReference>
<dbReference type="CDD" id="cd07067">
    <property type="entry name" value="HP_PGM_like"/>
    <property type="match status" value="1"/>
</dbReference>
<dbReference type="FunFam" id="3.40.50.1240:FF:000003">
    <property type="entry name" value="2,3-bisphosphoglycerate-dependent phosphoglycerate mutase"/>
    <property type="match status" value="1"/>
</dbReference>
<dbReference type="Gene3D" id="3.40.50.1240">
    <property type="entry name" value="Phosphoglycerate mutase-like"/>
    <property type="match status" value="1"/>
</dbReference>
<dbReference type="HAMAP" id="MF_01039">
    <property type="entry name" value="PGAM_GpmA"/>
    <property type="match status" value="1"/>
</dbReference>
<dbReference type="InterPro" id="IPR013078">
    <property type="entry name" value="His_Pase_superF_clade-1"/>
</dbReference>
<dbReference type="InterPro" id="IPR029033">
    <property type="entry name" value="His_PPase_superfam"/>
</dbReference>
<dbReference type="InterPro" id="IPR001345">
    <property type="entry name" value="PG/BPGM_mutase_AS"/>
</dbReference>
<dbReference type="InterPro" id="IPR005952">
    <property type="entry name" value="Phosphogly_mut1"/>
</dbReference>
<dbReference type="NCBIfam" id="TIGR01258">
    <property type="entry name" value="pgm_1"/>
    <property type="match status" value="1"/>
</dbReference>
<dbReference type="NCBIfam" id="NF010713">
    <property type="entry name" value="PRK14115.1"/>
    <property type="match status" value="1"/>
</dbReference>
<dbReference type="PANTHER" id="PTHR11931">
    <property type="entry name" value="PHOSPHOGLYCERATE MUTASE"/>
    <property type="match status" value="1"/>
</dbReference>
<dbReference type="Pfam" id="PF00300">
    <property type="entry name" value="His_Phos_1"/>
    <property type="match status" value="2"/>
</dbReference>
<dbReference type="PIRSF" id="PIRSF000709">
    <property type="entry name" value="6PFK_2-Ptase"/>
    <property type="match status" value="1"/>
</dbReference>
<dbReference type="SMART" id="SM00855">
    <property type="entry name" value="PGAM"/>
    <property type="match status" value="1"/>
</dbReference>
<dbReference type="SUPFAM" id="SSF53254">
    <property type="entry name" value="Phosphoglycerate mutase-like"/>
    <property type="match status" value="1"/>
</dbReference>
<dbReference type="PROSITE" id="PS00175">
    <property type="entry name" value="PG_MUTASE"/>
    <property type="match status" value="1"/>
</dbReference>
<feature type="chain" id="PRO_1000064042" description="2,3-bisphosphoglycerate-dependent phosphoglycerate mutase">
    <location>
        <begin position="1"/>
        <end position="249"/>
    </location>
</feature>
<feature type="active site" description="Tele-phosphohistidine intermediate" evidence="1">
    <location>
        <position position="9"/>
    </location>
</feature>
<feature type="active site" description="Proton donor/acceptor" evidence="1">
    <location>
        <position position="87"/>
    </location>
</feature>
<feature type="binding site" evidence="1">
    <location>
        <begin position="8"/>
        <end position="15"/>
    </location>
    <ligand>
        <name>substrate</name>
    </ligand>
</feature>
<feature type="binding site" evidence="1">
    <location>
        <begin position="21"/>
        <end position="22"/>
    </location>
    <ligand>
        <name>substrate</name>
    </ligand>
</feature>
<feature type="binding site" evidence="1">
    <location>
        <position position="60"/>
    </location>
    <ligand>
        <name>substrate</name>
    </ligand>
</feature>
<feature type="binding site" evidence="1">
    <location>
        <begin position="87"/>
        <end position="90"/>
    </location>
    <ligand>
        <name>substrate</name>
    </ligand>
</feature>
<feature type="binding site" evidence="1">
    <location>
        <position position="98"/>
    </location>
    <ligand>
        <name>substrate</name>
    </ligand>
</feature>
<feature type="binding site" evidence="1">
    <location>
        <begin position="114"/>
        <end position="115"/>
    </location>
    <ligand>
        <name>substrate</name>
    </ligand>
</feature>
<feature type="binding site" evidence="1">
    <location>
        <begin position="183"/>
        <end position="184"/>
    </location>
    <ligand>
        <name>substrate</name>
    </ligand>
</feature>
<feature type="site" description="Transition state stabilizer" evidence="1">
    <location>
        <position position="182"/>
    </location>
</feature>
<comment type="function">
    <text evidence="1">Catalyzes the interconversion of 2-phosphoglycerate and 3-phosphoglycerate.</text>
</comment>
<comment type="catalytic activity">
    <reaction evidence="1">
        <text>(2R)-2-phosphoglycerate = (2R)-3-phosphoglycerate</text>
        <dbReference type="Rhea" id="RHEA:15901"/>
        <dbReference type="ChEBI" id="CHEBI:58272"/>
        <dbReference type="ChEBI" id="CHEBI:58289"/>
        <dbReference type="EC" id="5.4.2.11"/>
    </reaction>
</comment>
<comment type="pathway">
    <text evidence="1">Carbohydrate degradation; glycolysis; pyruvate from D-glyceraldehyde 3-phosphate: step 3/5.</text>
</comment>
<comment type="subunit">
    <text evidence="1">Homodimer.</text>
</comment>
<comment type="similarity">
    <text evidence="1">Belongs to the phosphoglycerate mutase family. BPG-dependent PGAM subfamily.</text>
</comment>
<accession>A3NR09</accession>
<evidence type="ECO:0000255" key="1">
    <source>
        <dbReference type="HAMAP-Rule" id="MF_01039"/>
    </source>
</evidence>
<organism>
    <name type="scientific">Burkholderia pseudomallei (strain 1106a)</name>
    <dbReference type="NCBI Taxonomy" id="357348"/>
    <lineage>
        <taxon>Bacteria</taxon>
        <taxon>Pseudomonadati</taxon>
        <taxon>Pseudomonadota</taxon>
        <taxon>Betaproteobacteria</taxon>
        <taxon>Burkholderiales</taxon>
        <taxon>Burkholderiaceae</taxon>
        <taxon>Burkholderia</taxon>
        <taxon>pseudomallei group</taxon>
    </lineage>
</organism>
<gene>
    <name evidence="1" type="primary">gpmA</name>
    <name type="ordered locus">BURPS1106A_0497</name>
</gene>
<reference key="1">
    <citation type="journal article" date="2010" name="Genome Biol. Evol.">
        <title>Continuing evolution of Burkholderia mallei through genome reduction and large-scale rearrangements.</title>
        <authorList>
            <person name="Losada L."/>
            <person name="Ronning C.M."/>
            <person name="DeShazer D."/>
            <person name="Woods D."/>
            <person name="Fedorova N."/>
            <person name="Kim H.S."/>
            <person name="Shabalina S.A."/>
            <person name="Pearson T.R."/>
            <person name="Brinkac L."/>
            <person name="Tan P."/>
            <person name="Nandi T."/>
            <person name="Crabtree J."/>
            <person name="Badger J."/>
            <person name="Beckstrom-Sternberg S."/>
            <person name="Saqib M."/>
            <person name="Schutzer S.E."/>
            <person name="Keim P."/>
            <person name="Nierman W.C."/>
        </authorList>
    </citation>
    <scope>NUCLEOTIDE SEQUENCE [LARGE SCALE GENOMIC DNA]</scope>
    <source>
        <strain>1106a</strain>
    </source>
</reference>